<feature type="chain" id="PRO_0000265789" description="ATP synthase epsilon chain">
    <location>
        <begin position="1"/>
        <end position="135"/>
    </location>
</feature>
<sequence>MAQAFQFELVSPERLLLSAQVTEVVIPGSEGYLTALAGHSPLMTTIMPGVVSVKLADGKTDSYVVFGGFADITPQGCTVLAESATHVDDIDPADIQHRIDHARKVLEDASSNEHRTKAEIFLHQLMTLQGAILPA</sequence>
<name>ATPE_BRUAB</name>
<accession>Q57B89</accession>
<gene>
    <name evidence="1" type="primary">atpC</name>
    <name type="ordered locus">BruAb1_1778</name>
</gene>
<keyword id="KW-0066">ATP synthesis</keyword>
<keyword id="KW-0997">Cell inner membrane</keyword>
<keyword id="KW-1003">Cell membrane</keyword>
<keyword id="KW-0139">CF(1)</keyword>
<keyword id="KW-0375">Hydrogen ion transport</keyword>
<keyword id="KW-0406">Ion transport</keyword>
<keyword id="KW-0472">Membrane</keyword>
<keyword id="KW-0813">Transport</keyword>
<proteinExistence type="inferred from homology"/>
<protein>
    <recommendedName>
        <fullName evidence="1">ATP synthase epsilon chain</fullName>
    </recommendedName>
    <alternativeName>
        <fullName evidence="1">ATP synthase F1 sector epsilon subunit</fullName>
    </alternativeName>
    <alternativeName>
        <fullName evidence="1">F-ATPase epsilon subunit</fullName>
    </alternativeName>
</protein>
<reference key="1">
    <citation type="journal article" date="2005" name="J. Bacteriol.">
        <title>Completion of the genome sequence of Brucella abortus and comparison to the highly similar genomes of Brucella melitensis and Brucella suis.</title>
        <authorList>
            <person name="Halling S.M."/>
            <person name="Peterson-Burch B.D."/>
            <person name="Bricker B.J."/>
            <person name="Zuerner R.L."/>
            <person name="Qing Z."/>
            <person name="Li L.-L."/>
            <person name="Kapur V."/>
            <person name="Alt D.P."/>
            <person name="Olsen S.C."/>
        </authorList>
    </citation>
    <scope>NUCLEOTIDE SEQUENCE [LARGE SCALE GENOMIC DNA]</scope>
    <source>
        <strain>9-941</strain>
    </source>
</reference>
<comment type="function">
    <text evidence="1">Produces ATP from ADP in the presence of a proton gradient across the membrane.</text>
</comment>
<comment type="subunit">
    <text>F-type ATPases have 2 components, CF(1) - the catalytic core - and CF(0) - the membrane proton channel. CF(1) has five subunits: alpha(3), beta(3), gamma(1), delta(1), epsilon(1). CF(0) has three main subunits: a, b and c.</text>
</comment>
<comment type="subcellular location">
    <subcellularLocation>
        <location evidence="1">Cell inner membrane</location>
        <topology evidence="1">Peripheral membrane protein</topology>
    </subcellularLocation>
</comment>
<comment type="similarity">
    <text evidence="1">Belongs to the ATPase epsilon chain family.</text>
</comment>
<dbReference type="EMBL" id="AE017223">
    <property type="protein sequence ID" value="AAX75095.1"/>
    <property type="molecule type" value="Genomic_DNA"/>
</dbReference>
<dbReference type="RefSeq" id="WP_002964875.1">
    <property type="nucleotide sequence ID" value="NC_006932.1"/>
</dbReference>
<dbReference type="SMR" id="Q57B89"/>
<dbReference type="EnsemblBacteria" id="AAX75095">
    <property type="protein sequence ID" value="AAX75095"/>
    <property type="gene ID" value="BruAb1_1778"/>
</dbReference>
<dbReference type="KEGG" id="bmb:BruAb1_1778"/>
<dbReference type="HOGENOM" id="CLU_084338_2_1_5"/>
<dbReference type="Proteomes" id="UP000000540">
    <property type="component" value="Chromosome I"/>
</dbReference>
<dbReference type="GO" id="GO:0005886">
    <property type="term" value="C:plasma membrane"/>
    <property type="evidence" value="ECO:0007669"/>
    <property type="project" value="UniProtKB-SubCell"/>
</dbReference>
<dbReference type="GO" id="GO:0045259">
    <property type="term" value="C:proton-transporting ATP synthase complex"/>
    <property type="evidence" value="ECO:0007669"/>
    <property type="project" value="UniProtKB-KW"/>
</dbReference>
<dbReference type="GO" id="GO:0005524">
    <property type="term" value="F:ATP binding"/>
    <property type="evidence" value="ECO:0007669"/>
    <property type="project" value="UniProtKB-UniRule"/>
</dbReference>
<dbReference type="GO" id="GO:0046933">
    <property type="term" value="F:proton-transporting ATP synthase activity, rotational mechanism"/>
    <property type="evidence" value="ECO:0007669"/>
    <property type="project" value="UniProtKB-UniRule"/>
</dbReference>
<dbReference type="CDD" id="cd12152">
    <property type="entry name" value="F1-ATPase_delta"/>
    <property type="match status" value="1"/>
</dbReference>
<dbReference type="Gene3D" id="2.60.15.10">
    <property type="entry name" value="F0F1 ATP synthase delta/epsilon subunit, N-terminal"/>
    <property type="match status" value="1"/>
</dbReference>
<dbReference type="HAMAP" id="MF_00530">
    <property type="entry name" value="ATP_synth_epsil_bac"/>
    <property type="match status" value="1"/>
</dbReference>
<dbReference type="InterPro" id="IPR001469">
    <property type="entry name" value="ATP_synth_F1_dsu/esu"/>
</dbReference>
<dbReference type="InterPro" id="IPR020546">
    <property type="entry name" value="ATP_synth_F1_dsu/esu_N"/>
</dbReference>
<dbReference type="InterPro" id="IPR036771">
    <property type="entry name" value="ATPsynth_dsu/esu_N"/>
</dbReference>
<dbReference type="NCBIfam" id="TIGR01216">
    <property type="entry name" value="ATP_synt_epsi"/>
    <property type="match status" value="1"/>
</dbReference>
<dbReference type="NCBIfam" id="NF001851">
    <property type="entry name" value="PRK00571.2-4"/>
    <property type="match status" value="1"/>
</dbReference>
<dbReference type="PANTHER" id="PTHR13822">
    <property type="entry name" value="ATP SYNTHASE DELTA/EPSILON CHAIN"/>
    <property type="match status" value="1"/>
</dbReference>
<dbReference type="PANTHER" id="PTHR13822:SF10">
    <property type="entry name" value="ATP SYNTHASE EPSILON CHAIN, CHLOROPLASTIC"/>
    <property type="match status" value="1"/>
</dbReference>
<dbReference type="Pfam" id="PF02823">
    <property type="entry name" value="ATP-synt_DE_N"/>
    <property type="match status" value="1"/>
</dbReference>
<dbReference type="SUPFAM" id="SSF51344">
    <property type="entry name" value="Epsilon subunit of F1F0-ATP synthase N-terminal domain"/>
    <property type="match status" value="1"/>
</dbReference>
<evidence type="ECO:0000255" key="1">
    <source>
        <dbReference type="HAMAP-Rule" id="MF_00530"/>
    </source>
</evidence>
<organism>
    <name type="scientific">Brucella abortus biovar 1 (strain 9-941)</name>
    <dbReference type="NCBI Taxonomy" id="262698"/>
    <lineage>
        <taxon>Bacteria</taxon>
        <taxon>Pseudomonadati</taxon>
        <taxon>Pseudomonadota</taxon>
        <taxon>Alphaproteobacteria</taxon>
        <taxon>Hyphomicrobiales</taxon>
        <taxon>Brucellaceae</taxon>
        <taxon>Brucella/Ochrobactrum group</taxon>
        <taxon>Brucella</taxon>
    </lineage>
</organism>